<gene>
    <name evidence="1" type="primary">pdxA</name>
    <name type="ordered locus">R01150</name>
    <name type="ORF">SMc00580</name>
</gene>
<comment type="function">
    <text evidence="1">Catalyzes the NAD(P)-dependent oxidation of 4-(phosphooxy)-L-threonine (HTP) into 2-amino-3-oxo-4-(phosphooxy)butyric acid which spontaneously decarboxylates to form 3-amino-2-oxopropyl phosphate (AHAP).</text>
</comment>
<comment type="catalytic activity">
    <reaction evidence="1">
        <text>4-(phosphooxy)-L-threonine + NAD(+) = 3-amino-2-oxopropyl phosphate + CO2 + NADH</text>
        <dbReference type="Rhea" id="RHEA:32275"/>
        <dbReference type="ChEBI" id="CHEBI:16526"/>
        <dbReference type="ChEBI" id="CHEBI:57279"/>
        <dbReference type="ChEBI" id="CHEBI:57540"/>
        <dbReference type="ChEBI" id="CHEBI:57945"/>
        <dbReference type="ChEBI" id="CHEBI:58452"/>
        <dbReference type="EC" id="1.1.1.262"/>
    </reaction>
</comment>
<comment type="cofactor">
    <cofactor evidence="1">
        <name>Zn(2+)</name>
        <dbReference type="ChEBI" id="CHEBI:29105"/>
    </cofactor>
    <cofactor evidence="1">
        <name>Mg(2+)</name>
        <dbReference type="ChEBI" id="CHEBI:18420"/>
    </cofactor>
    <cofactor evidence="1">
        <name>Co(2+)</name>
        <dbReference type="ChEBI" id="CHEBI:48828"/>
    </cofactor>
    <text evidence="1">Binds 1 divalent metal cation per subunit. Can use ions such as Zn(2+), Mg(2+) or Co(2+).</text>
</comment>
<comment type="pathway">
    <text evidence="1">Cofactor biosynthesis; pyridoxine 5'-phosphate biosynthesis; pyridoxine 5'-phosphate from D-erythrose 4-phosphate: step 4/5.</text>
</comment>
<comment type="subunit">
    <text evidence="1">Homodimer.</text>
</comment>
<comment type="subcellular location">
    <subcellularLocation>
        <location evidence="1">Cytoplasm</location>
    </subcellularLocation>
</comment>
<comment type="miscellaneous">
    <text evidence="1">The active site is located at the dimer interface.</text>
</comment>
<comment type="similarity">
    <text evidence="1">Belongs to the PdxA family.</text>
</comment>
<sequence length="342" mass="35613">MSETSIGPVALTMGDPAGIGPDITLSVWAKRADRPTPPFLYVGDPALLAARAKLLGQTVPICETDCPGAVAAFRQALPVWPVRSPAPVIPGNPDAANASAVTDAIDTAVRLVLAGEASALATNPISKAVLYEAGFRFPGHTEYLADLAARATGVAALPVMMLAGPKLRAVPVTIHIPLKDVPAALTPDLIYETCTITAADLRSRFGLPAPRLAIAGLNPHAGEGGALGREDDAVIRPVIDRLRAEGLDVVGPLPADTMFHDRARETYDVAICMYHDQALIPAKALGFDDSVNVTLGLPFIRTSPDHGTAFSLAGKGIAREESLLAALRLAAELARNAGGTKR</sequence>
<name>PDXA_RHIME</name>
<dbReference type="EC" id="1.1.1.262" evidence="1"/>
<dbReference type="EMBL" id="AL591688">
    <property type="protein sequence ID" value="CAC45729.1"/>
    <property type="molecule type" value="Genomic_DNA"/>
</dbReference>
<dbReference type="RefSeq" id="NP_385256.1">
    <property type="nucleotide sequence ID" value="NC_003047.1"/>
</dbReference>
<dbReference type="RefSeq" id="WP_010969073.1">
    <property type="nucleotide sequence ID" value="NC_003047.1"/>
</dbReference>
<dbReference type="SMR" id="Q92QZ0"/>
<dbReference type="EnsemblBacteria" id="CAC45729">
    <property type="protein sequence ID" value="CAC45729"/>
    <property type="gene ID" value="SMc00580"/>
</dbReference>
<dbReference type="KEGG" id="sme:SMc00580"/>
<dbReference type="PATRIC" id="fig|266834.11.peg.2559"/>
<dbReference type="eggNOG" id="COG1995">
    <property type="taxonomic scope" value="Bacteria"/>
</dbReference>
<dbReference type="HOGENOM" id="CLU_040168_1_0_5"/>
<dbReference type="OrthoDB" id="9801783at2"/>
<dbReference type="UniPathway" id="UPA00244">
    <property type="reaction ID" value="UER00312"/>
</dbReference>
<dbReference type="Proteomes" id="UP000001976">
    <property type="component" value="Chromosome"/>
</dbReference>
<dbReference type="GO" id="GO:0005737">
    <property type="term" value="C:cytoplasm"/>
    <property type="evidence" value="ECO:0007669"/>
    <property type="project" value="UniProtKB-SubCell"/>
</dbReference>
<dbReference type="GO" id="GO:0050570">
    <property type="term" value="F:4-hydroxythreonine-4-phosphate dehydrogenase activity"/>
    <property type="evidence" value="ECO:0007669"/>
    <property type="project" value="UniProtKB-UniRule"/>
</dbReference>
<dbReference type="GO" id="GO:0050897">
    <property type="term" value="F:cobalt ion binding"/>
    <property type="evidence" value="ECO:0007669"/>
    <property type="project" value="UniProtKB-UniRule"/>
</dbReference>
<dbReference type="GO" id="GO:0000287">
    <property type="term" value="F:magnesium ion binding"/>
    <property type="evidence" value="ECO:0007669"/>
    <property type="project" value="UniProtKB-UniRule"/>
</dbReference>
<dbReference type="GO" id="GO:0051287">
    <property type="term" value="F:NAD binding"/>
    <property type="evidence" value="ECO:0007669"/>
    <property type="project" value="InterPro"/>
</dbReference>
<dbReference type="GO" id="GO:0008270">
    <property type="term" value="F:zinc ion binding"/>
    <property type="evidence" value="ECO:0007669"/>
    <property type="project" value="UniProtKB-UniRule"/>
</dbReference>
<dbReference type="GO" id="GO:0042823">
    <property type="term" value="P:pyridoxal phosphate biosynthetic process"/>
    <property type="evidence" value="ECO:0007669"/>
    <property type="project" value="UniProtKB-UniRule"/>
</dbReference>
<dbReference type="GO" id="GO:0008615">
    <property type="term" value="P:pyridoxine biosynthetic process"/>
    <property type="evidence" value="ECO:0007669"/>
    <property type="project" value="UniProtKB-UniRule"/>
</dbReference>
<dbReference type="Gene3D" id="3.40.718.10">
    <property type="entry name" value="Isopropylmalate Dehydrogenase"/>
    <property type="match status" value="1"/>
</dbReference>
<dbReference type="HAMAP" id="MF_00536">
    <property type="entry name" value="PdxA"/>
    <property type="match status" value="1"/>
</dbReference>
<dbReference type="InterPro" id="IPR037510">
    <property type="entry name" value="PdxA"/>
</dbReference>
<dbReference type="InterPro" id="IPR005255">
    <property type="entry name" value="PdxA_fam"/>
</dbReference>
<dbReference type="NCBIfam" id="TIGR00557">
    <property type="entry name" value="pdxA"/>
    <property type="match status" value="1"/>
</dbReference>
<dbReference type="NCBIfam" id="NF003699">
    <property type="entry name" value="PRK05312.1"/>
    <property type="match status" value="1"/>
</dbReference>
<dbReference type="PANTHER" id="PTHR30004">
    <property type="entry name" value="4-HYDROXYTHREONINE-4-PHOSPHATE DEHYDROGENASE"/>
    <property type="match status" value="1"/>
</dbReference>
<dbReference type="PANTHER" id="PTHR30004:SF6">
    <property type="entry name" value="D-THREONATE 4-PHOSPHATE DEHYDROGENASE"/>
    <property type="match status" value="1"/>
</dbReference>
<dbReference type="Pfam" id="PF04166">
    <property type="entry name" value="PdxA"/>
    <property type="match status" value="1"/>
</dbReference>
<dbReference type="SUPFAM" id="SSF53659">
    <property type="entry name" value="Isocitrate/Isopropylmalate dehydrogenase-like"/>
    <property type="match status" value="1"/>
</dbReference>
<organism>
    <name type="scientific">Rhizobium meliloti (strain 1021)</name>
    <name type="common">Ensifer meliloti</name>
    <name type="synonym">Sinorhizobium meliloti</name>
    <dbReference type="NCBI Taxonomy" id="266834"/>
    <lineage>
        <taxon>Bacteria</taxon>
        <taxon>Pseudomonadati</taxon>
        <taxon>Pseudomonadota</taxon>
        <taxon>Alphaproteobacteria</taxon>
        <taxon>Hyphomicrobiales</taxon>
        <taxon>Rhizobiaceae</taxon>
        <taxon>Sinorhizobium/Ensifer group</taxon>
        <taxon>Sinorhizobium</taxon>
    </lineage>
</organism>
<proteinExistence type="inferred from homology"/>
<feature type="chain" id="PRO_0000188821" description="4-hydroxythreonine-4-phosphate dehydrogenase">
    <location>
        <begin position="1"/>
        <end position="342"/>
    </location>
</feature>
<feature type="binding site" evidence="1">
    <location>
        <position position="140"/>
    </location>
    <ligand>
        <name>substrate</name>
    </ligand>
</feature>
<feature type="binding site" evidence="1">
    <location>
        <position position="141"/>
    </location>
    <ligand>
        <name>substrate</name>
    </ligand>
</feature>
<feature type="binding site" evidence="1">
    <location>
        <position position="175"/>
    </location>
    <ligand>
        <name>a divalent metal cation</name>
        <dbReference type="ChEBI" id="CHEBI:60240"/>
        <note>ligand shared between dimeric partners</note>
    </ligand>
</feature>
<feature type="binding site" evidence="1">
    <location>
        <position position="220"/>
    </location>
    <ligand>
        <name>a divalent metal cation</name>
        <dbReference type="ChEBI" id="CHEBI:60240"/>
        <note>ligand shared between dimeric partners</note>
    </ligand>
</feature>
<feature type="binding site" evidence="1">
    <location>
        <position position="275"/>
    </location>
    <ligand>
        <name>a divalent metal cation</name>
        <dbReference type="ChEBI" id="CHEBI:60240"/>
        <note>ligand shared between dimeric partners</note>
    </ligand>
</feature>
<feature type="binding site" evidence="1">
    <location>
        <position position="283"/>
    </location>
    <ligand>
        <name>substrate</name>
    </ligand>
</feature>
<feature type="binding site" evidence="1">
    <location>
        <position position="292"/>
    </location>
    <ligand>
        <name>substrate</name>
    </ligand>
</feature>
<feature type="binding site" evidence="1">
    <location>
        <position position="301"/>
    </location>
    <ligand>
        <name>substrate</name>
    </ligand>
</feature>
<reference key="1">
    <citation type="journal article" date="2001" name="Proc. Natl. Acad. Sci. U.S.A.">
        <title>Analysis of the chromosome sequence of the legume symbiont Sinorhizobium meliloti strain 1021.</title>
        <authorList>
            <person name="Capela D."/>
            <person name="Barloy-Hubler F."/>
            <person name="Gouzy J."/>
            <person name="Bothe G."/>
            <person name="Ampe F."/>
            <person name="Batut J."/>
            <person name="Boistard P."/>
            <person name="Becker A."/>
            <person name="Boutry M."/>
            <person name="Cadieu E."/>
            <person name="Dreano S."/>
            <person name="Gloux S."/>
            <person name="Godrie T."/>
            <person name="Goffeau A."/>
            <person name="Kahn D."/>
            <person name="Kiss E."/>
            <person name="Lelaure V."/>
            <person name="Masuy D."/>
            <person name="Pohl T."/>
            <person name="Portetelle D."/>
            <person name="Puehler A."/>
            <person name="Purnelle B."/>
            <person name="Ramsperger U."/>
            <person name="Renard C."/>
            <person name="Thebault P."/>
            <person name="Vandenbol M."/>
            <person name="Weidner S."/>
            <person name="Galibert F."/>
        </authorList>
    </citation>
    <scope>NUCLEOTIDE SEQUENCE [LARGE SCALE GENOMIC DNA]</scope>
    <source>
        <strain>1021</strain>
    </source>
</reference>
<reference key="2">
    <citation type="journal article" date="2001" name="Science">
        <title>The composite genome of the legume symbiont Sinorhizobium meliloti.</title>
        <authorList>
            <person name="Galibert F."/>
            <person name="Finan T.M."/>
            <person name="Long S.R."/>
            <person name="Puehler A."/>
            <person name="Abola P."/>
            <person name="Ampe F."/>
            <person name="Barloy-Hubler F."/>
            <person name="Barnett M.J."/>
            <person name="Becker A."/>
            <person name="Boistard P."/>
            <person name="Bothe G."/>
            <person name="Boutry M."/>
            <person name="Bowser L."/>
            <person name="Buhrmester J."/>
            <person name="Cadieu E."/>
            <person name="Capela D."/>
            <person name="Chain P."/>
            <person name="Cowie A."/>
            <person name="Davis R.W."/>
            <person name="Dreano S."/>
            <person name="Federspiel N.A."/>
            <person name="Fisher R.F."/>
            <person name="Gloux S."/>
            <person name="Godrie T."/>
            <person name="Goffeau A."/>
            <person name="Golding B."/>
            <person name="Gouzy J."/>
            <person name="Gurjal M."/>
            <person name="Hernandez-Lucas I."/>
            <person name="Hong A."/>
            <person name="Huizar L."/>
            <person name="Hyman R.W."/>
            <person name="Jones T."/>
            <person name="Kahn D."/>
            <person name="Kahn M.L."/>
            <person name="Kalman S."/>
            <person name="Keating D.H."/>
            <person name="Kiss E."/>
            <person name="Komp C."/>
            <person name="Lelaure V."/>
            <person name="Masuy D."/>
            <person name="Palm C."/>
            <person name="Peck M.C."/>
            <person name="Pohl T.M."/>
            <person name="Portetelle D."/>
            <person name="Purnelle B."/>
            <person name="Ramsperger U."/>
            <person name="Surzycki R."/>
            <person name="Thebault P."/>
            <person name="Vandenbol M."/>
            <person name="Vorhoelter F.J."/>
            <person name="Weidner S."/>
            <person name="Wells D.H."/>
            <person name="Wong K."/>
            <person name="Yeh K.-C."/>
            <person name="Batut J."/>
        </authorList>
    </citation>
    <scope>NUCLEOTIDE SEQUENCE [LARGE SCALE GENOMIC DNA]</scope>
    <source>
        <strain>1021</strain>
    </source>
</reference>
<protein>
    <recommendedName>
        <fullName evidence="1">4-hydroxythreonine-4-phosphate dehydrogenase</fullName>
        <ecNumber evidence="1">1.1.1.262</ecNumber>
    </recommendedName>
    <alternativeName>
        <fullName evidence="1">4-(phosphohydroxy)-L-threonine dehydrogenase</fullName>
    </alternativeName>
</protein>
<evidence type="ECO:0000255" key="1">
    <source>
        <dbReference type="HAMAP-Rule" id="MF_00536"/>
    </source>
</evidence>
<accession>Q92QZ0</accession>
<keyword id="KW-0170">Cobalt</keyword>
<keyword id="KW-0963">Cytoplasm</keyword>
<keyword id="KW-0460">Magnesium</keyword>
<keyword id="KW-0479">Metal-binding</keyword>
<keyword id="KW-0520">NAD</keyword>
<keyword id="KW-0521">NADP</keyword>
<keyword id="KW-0560">Oxidoreductase</keyword>
<keyword id="KW-0664">Pyridoxine biosynthesis</keyword>
<keyword id="KW-1185">Reference proteome</keyword>
<keyword id="KW-0862">Zinc</keyword>